<sequence length="190" mass="22899">MKRVWVTGYRSYELNIFKDNDPKVQVIKEVLKNYLRAQLELNDDEFWVITGPQMGTERWGLEAALELQADFPQLKTALMFPFAEFGKQWNENNQLKLTSITQQVDFFANVSDKPYQSPQQLRNYQQFMLTHTDEAFLLYDPEYQGKTKYDYEIIQKYKEESEYSMTFVDFDELQEEAEEWAERQREKDEF</sequence>
<accession>A5VK10</accession>
<feature type="chain" id="PRO_0000382547" description="UPF0398 protein Lreu_0922">
    <location>
        <begin position="1"/>
        <end position="190"/>
    </location>
</feature>
<dbReference type="EMBL" id="CP000705">
    <property type="protein sequence ID" value="ABQ83184.1"/>
    <property type="molecule type" value="Genomic_DNA"/>
</dbReference>
<dbReference type="RefSeq" id="WP_003667871.1">
    <property type="nucleotide sequence ID" value="NC_009513.1"/>
</dbReference>
<dbReference type="SMR" id="A5VK10"/>
<dbReference type="STRING" id="557436.Lreu_0922"/>
<dbReference type="KEGG" id="lre:Lreu_0922"/>
<dbReference type="eggNOG" id="COG4474">
    <property type="taxonomic scope" value="Bacteria"/>
</dbReference>
<dbReference type="HOGENOM" id="CLU_105319_0_0_9"/>
<dbReference type="OMA" id="LEWVITG"/>
<dbReference type="Proteomes" id="UP000001991">
    <property type="component" value="Chromosome"/>
</dbReference>
<dbReference type="Gene3D" id="3.40.50.450">
    <property type="match status" value="1"/>
</dbReference>
<dbReference type="HAMAP" id="MF_01575">
    <property type="entry name" value="UPF0398"/>
    <property type="match status" value="1"/>
</dbReference>
<dbReference type="InterPro" id="IPR010697">
    <property type="entry name" value="YspA"/>
</dbReference>
<dbReference type="NCBIfam" id="NF010181">
    <property type="entry name" value="PRK13660.1"/>
    <property type="match status" value="1"/>
</dbReference>
<dbReference type="PANTHER" id="PTHR38440:SF1">
    <property type="entry name" value="UPF0398 PROTEIN SPR0331"/>
    <property type="match status" value="1"/>
</dbReference>
<dbReference type="PANTHER" id="PTHR38440">
    <property type="entry name" value="UPF0398 PROTEIN YPSA"/>
    <property type="match status" value="1"/>
</dbReference>
<dbReference type="Pfam" id="PF06908">
    <property type="entry name" value="YpsA"/>
    <property type="match status" value="1"/>
</dbReference>
<dbReference type="PIRSF" id="PIRSF021290">
    <property type="entry name" value="DUF1273"/>
    <property type="match status" value="1"/>
</dbReference>
<dbReference type="SUPFAM" id="SSF102405">
    <property type="entry name" value="MCP/YpsA-like"/>
    <property type="match status" value="1"/>
</dbReference>
<evidence type="ECO:0000255" key="1">
    <source>
        <dbReference type="HAMAP-Rule" id="MF_01575"/>
    </source>
</evidence>
<gene>
    <name type="ordered locus">Lreu_0922</name>
</gene>
<comment type="similarity">
    <text evidence="1">Belongs to the UPF0398 family.</text>
</comment>
<name>Y922_LIMRD</name>
<keyword id="KW-1185">Reference proteome</keyword>
<reference key="1">
    <citation type="journal article" date="2011" name="PLoS Genet.">
        <title>The evolution of host specialization in the vertebrate gut symbiont Lactobacillus reuteri.</title>
        <authorList>
            <person name="Frese S.A."/>
            <person name="Benson A.K."/>
            <person name="Tannock G.W."/>
            <person name="Loach D.M."/>
            <person name="Kim J."/>
            <person name="Zhang M."/>
            <person name="Oh P.L."/>
            <person name="Heng N.C."/>
            <person name="Patil P.B."/>
            <person name="Juge N."/>
            <person name="Mackenzie D.A."/>
            <person name="Pearson B.M."/>
            <person name="Lapidus A."/>
            <person name="Dalin E."/>
            <person name="Tice H."/>
            <person name="Goltsman E."/>
            <person name="Land M."/>
            <person name="Hauser L."/>
            <person name="Ivanova N."/>
            <person name="Kyrpides N.C."/>
            <person name="Walter J."/>
        </authorList>
    </citation>
    <scope>NUCLEOTIDE SEQUENCE [LARGE SCALE GENOMIC DNA]</scope>
    <source>
        <strain>DSM 20016</strain>
    </source>
</reference>
<organism>
    <name type="scientific">Limosilactobacillus reuteri (strain DSM 20016)</name>
    <name type="common">Lactobacillus reuteri</name>
    <dbReference type="NCBI Taxonomy" id="557436"/>
    <lineage>
        <taxon>Bacteria</taxon>
        <taxon>Bacillati</taxon>
        <taxon>Bacillota</taxon>
        <taxon>Bacilli</taxon>
        <taxon>Lactobacillales</taxon>
        <taxon>Lactobacillaceae</taxon>
        <taxon>Limosilactobacillus</taxon>
    </lineage>
</organism>
<proteinExistence type="inferred from homology"/>
<protein>
    <recommendedName>
        <fullName evidence="1">UPF0398 protein Lreu_0922</fullName>
    </recommendedName>
</protein>